<reference key="1">
    <citation type="submission" date="2006-10" db="EMBL/GenBank/DDBJ databases">
        <title>Complete sequence of chromosome of Pelobacter propionicus DSM 2379.</title>
        <authorList>
            <consortium name="US DOE Joint Genome Institute"/>
            <person name="Copeland A."/>
            <person name="Lucas S."/>
            <person name="Lapidus A."/>
            <person name="Barry K."/>
            <person name="Detter J.C."/>
            <person name="Glavina del Rio T."/>
            <person name="Hammon N."/>
            <person name="Israni S."/>
            <person name="Dalin E."/>
            <person name="Tice H."/>
            <person name="Pitluck S."/>
            <person name="Saunders E."/>
            <person name="Brettin T."/>
            <person name="Bruce D."/>
            <person name="Han C."/>
            <person name="Tapia R."/>
            <person name="Schmutz J."/>
            <person name="Larimer F."/>
            <person name="Land M."/>
            <person name="Hauser L."/>
            <person name="Kyrpides N."/>
            <person name="Kim E."/>
            <person name="Lovley D."/>
            <person name="Richardson P."/>
        </authorList>
    </citation>
    <scope>NUCLEOTIDE SEQUENCE [LARGE SCALE GENOMIC DNA]</scope>
    <source>
        <strain>DSM 2379 / NBRC 103807 / OttBd1</strain>
    </source>
</reference>
<comment type="function">
    <text evidence="1">Catalyzes a salvage reaction resulting in the formation of AMP, that is energically less costly than de novo synthesis.</text>
</comment>
<comment type="catalytic activity">
    <reaction evidence="1">
        <text>AMP + diphosphate = 5-phospho-alpha-D-ribose 1-diphosphate + adenine</text>
        <dbReference type="Rhea" id="RHEA:16609"/>
        <dbReference type="ChEBI" id="CHEBI:16708"/>
        <dbReference type="ChEBI" id="CHEBI:33019"/>
        <dbReference type="ChEBI" id="CHEBI:58017"/>
        <dbReference type="ChEBI" id="CHEBI:456215"/>
        <dbReference type="EC" id="2.4.2.7"/>
    </reaction>
</comment>
<comment type="pathway">
    <text evidence="1">Purine metabolism; AMP biosynthesis via salvage pathway; AMP from adenine: step 1/1.</text>
</comment>
<comment type="subunit">
    <text evidence="1">Homodimer.</text>
</comment>
<comment type="subcellular location">
    <subcellularLocation>
        <location evidence="1">Cytoplasm</location>
    </subcellularLocation>
</comment>
<comment type="similarity">
    <text evidence="1">Belongs to the purine/pyrimidine phosphoribosyltransferase family.</text>
</comment>
<proteinExistence type="inferred from homology"/>
<feature type="chain" id="PRO_0000321382" description="Adenine phosphoribosyltransferase">
    <location>
        <begin position="1"/>
        <end position="172"/>
    </location>
</feature>
<sequence>MMEDLKSIIRDIPDFPKKGIVFKDITTLLQDAQSYQRMIDLIAHRYVGQRVDKVVGVEARGFIIGAALAYKLCAGVVLVRKPGKLPSETFSKTYSLEYGTDTLEIHRDAIKPGERVLIADDLLATGGTMAAVVDMVLSMRAEIVDCCFMTELNFLNGRSKLPAGKVYSLLNF</sequence>
<dbReference type="EC" id="2.4.2.7" evidence="1"/>
<dbReference type="EMBL" id="CP000482">
    <property type="protein sequence ID" value="ABL00341.1"/>
    <property type="molecule type" value="Genomic_DNA"/>
</dbReference>
<dbReference type="SMR" id="A1ASM0"/>
<dbReference type="STRING" id="338966.Ppro_2740"/>
<dbReference type="KEGG" id="ppd:Ppro_2740"/>
<dbReference type="eggNOG" id="COG0503">
    <property type="taxonomic scope" value="Bacteria"/>
</dbReference>
<dbReference type="HOGENOM" id="CLU_063339_3_0_7"/>
<dbReference type="UniPathway" id="UPA00588">
    <property type="reaction ID" value="UER00646"/>
</dbReference>
<dbReference type="Proteomes" id="UP000006732">
    <property type="component" value="Chromosome"/>
</dbReference>
<dbReference type="GO" id="GO:0005737">
    <property type="term" value="C:cytoplasm"/>
    <property type="evidence" value="ECO:0007669"/>
    <property type="project" value="UniProtKB-SubCell"/>
</dbReference>
<dbReference type="GO" id="GO:0002055">
    <property type="term" value="F:adenine binding"/>
    <property type="evidence" value="ECO:0007669"/>
    <property type="project" value="TreeGrafter"/>
</dbReference>
<dbReference type="GO" id="GO:0003999">
    <property type="term" value="F:adenine phosphoribosyltransferase activity"/>
    <property type="evidence" value="ECO:0007669"/>
    <property type="project" value="UniProtKB-UniRule"/>
</dbReference>
<dbReference type="GO" id="GO:0016208">
    <property type="term" value="F:AMP binding"/>
    <property type="evidence" value="ECO:0007669"/>
    <property type="project" value="TreeGrafter"/>
</dbReference>
<dbReference type="GO" id="GO:0006168">
    <property type="term" value="P:adenine salvage"/>
    <property type="evidence" value="ECO:0007669"/>
    <property type="project" value="InterPro"/>
</dbReference>
<dbReference type="GO" id="GO:0044209">
    <property type="term" value="P:AMP salvage"/>
    <property type="evidence" value="ECO:0007669"/>
    <property type="project" value="UniProtKB-UniRule"/>
</dbReference>
<dbReference type="GO" id="GO:0006166">
    <property type="term" value="P:purine ribonucleoside salvage"/>
    <property type="evidence" value="ECO:0007669"/>
    <property type="project" value="UniProtKB-KW"/>
</dbReference>
<dbReference type="CDD" id="cd06223">
    <property type="entry name" value="PRTases_typeI"/>
    <property type="match status" value="1"/>
</dbReference>
<dbReference type="FunFam" id="3.40.50.2020:FF:000004">
    <property type="entry name" value="Adenine phosphoribosyltransferase"/>
    <property type="match status" value="1"/>
</dbReference>
<dbReference type="Gene3D" id="3.40.50.2020">
    <property type="match status" value="1"/>
</dbReference>
<dbReference type="HAMAP" id="MF_00004">
    <property type="entry name" value="Aden_phosphoribosyltr"/>
    <property type="match status" value="1"/>
</dbReference>
<dbReference type="InterPro" id="IPR005764">
    <property type="entry name" value="Ade_phspho_trans"/>
</dbReference>
<dbReference type="InterPro" id="IPR000836">
    <property type="entry name" value="PRibTrfase_dom"/>
</dbReference>
<dbReference type="InterPro" id="IPR029057">
    <property type="entry name" value="PRTase-like"/>
</dbReference>
<dbReference type="InterPro" id="IPR050054">
    <property type="entry name" value="UPRTase/APRTase"/>
</dbReference>
<dbReference type="NCBIfam" id="TIGR01090">
    <property type="entry name" value="apt"/>
    <property type="match status" value="1"/>
</dbReference>
<dbReference type="NCBIfam" id="NF002634">
    <property type="entry name" value="PRK02304.1-3"/>
    <property type="match status" value="1"/>
</dbReference>
<dbReference type="NCBIfam" id="NF002636">
    <property type="entry name" value="PRK02304.1-5"/>
    <property type="match status" value="1"/>
</dbReference>
<dbReference type="PANTHER" id="PTHR32315">
    <property type="entry name" value="ADENINE PHOSPHORIBOSYLTRANSFERASE"/>
    <property type="match status" value="1"/>
</dbReference>
<dbReference type="PANTHER" id="PTHR32315:SF3">
    <property type="entry name" value="ADENINE PHOSPHORIBOSYLTRANSFERASE"/>
    <property type="match status" value="1"/>
</dbReference>
<dbReference type="Pfam" id="PF00156">
    <property type="entry name" value="Pribosyltran"/>
    <property type="match status" value="1"/>
</dbReference>
<dbReference type="SUPFAM" id="SSF53271">
    <property type="entry name" value="PRTase-like"/>
    <property type="match status" value="1"/>
</dbReference>
<accession>A1ASM0</accession>
<protein>
    <recommendedName>
        <fullName evidence="1">Adenine phosphoribosyltransferase</fullName>
        <shortName evidence="1">APRT</shortName>
        <ecNumber evidence="1">2.4.2.7</ecNumber>
    </recommendedName>
</protein>
<name>APT_PELPD</name>
<gene>
    <name evidence="1" type="primary">apt</name>
    <name type="ordered locus">Ppro_2740</name>
</gene>
<evidence type="ECO:0000255" key="1">
    <source>
        <dbReference type="HAMAP-Rule" id="MF_00004"/>
    </source>
</evidence>
<keyword id="KW-0963">Cytoplasm</keyword>
<keyword id="KW-0328">Glycosyltransferase</keyword>
<keyword id="KW-0660">Purine salvage</keyword>
<keyword id="KW-1185">Reference proteome</keyword>
<keyword id="KW-0808">Transferase</keyword>
<organism>
    <name type="scientific">Pelobacter propionicus (strain DSM 2379 / NBRC 103807 / OttBd1)</name>
    <dbReference type="NCBI Taxonomy" id="338966"/>
    <lineage>
        <taxon>Bacteria</taxon>
        <taxon>Pseudomonadati</taxon>
        <taxon>Thermodesulfobacteriota</taxon>
        <taxon>Desulfuromonadia</taxon>
        <taxon>Desulfuromonadales</taxon>
        <taxon>Desulfuromonadaceae</taxon>
        <taxon>Pelobacter</taxon>
    </lineage>
</organism>